<sequence>MRFYIGLMAALMLTSVLRTDSASVGQTGTKSELAVIERVIRQRDAADVKPVARQNEGPGRDPAPCCQHPIETCCRR</sequence>
<proteinExistence type="inferred from homology"/>
<accession>D2Y169</accession>
<evidence type="ECO:0000250" key="1"/>
<evidence type="ECO:0000255" key="2"/>
<evidence type="ECO:0000303" key="3">
    <source>
    </source>
</evidence>
<evidence type="ECO:0000305" key="4"/>
<evidence type="ECO:0000305" key="5">
    <source>
    </source>
</evidence>
<keyword id="KW-1015">Disulfide bond</keyword>
<keyword id="KW-0379">Hydroxylation</keyword>
<keyword id="KW-0872">Ion channel impairing toxin</keyword>
<keyword id="KW-0528">Neurotoxin</keyword>
<keyword id="KW-0964">Secreted</keyword>
<keyword id="KW-0732">Signal</keyword>
<keyword id="KW-0800">Toxin</keyword>
<organism>
    <name type="scientific">Californiconus californicus</name>
    <name type="common">California cone</name>
    <name type="synonym">Conus californicus</name>
    <dbReference type="NCBI Taxonomy" id="1736779"/>
    <lineage>
        <taxon>Eukaryota</taxon>
        <taxon>Metazoa</taxon>
        <taxon>Spiralia</taxon>
        <taxon>Lophotrochozoa</taxon>
        <taxon>Mollusca</taxon>
        <taxon>Gastropoda</taxon>
        <taxon>Caenogastropoda</taxon>
        <taxon>Neogastropoda</taxon>
        <taxon>Conoidea</taxon>
        <taxon>Conidae</taxon>
        <taxon>Californiconus</taxon>
    </lineage>
</organism>
<reference key="1">
    <citation type="journal article" date="2011" name="Toxicon">
        <title>Diversity of conotoxin types from Conus californicus reflects a diversity of prey types and a novel evolutionary history.</title>
        <authorList>
            <person name="Elliger C.A."/>
            <person name="Richmond T.A."/>
            <person name="Lebaric Z.N."/>
            <person name="Pierce N.T."/>
            <person name="Sweedler J.V."/>
            <person name="Gilly W.F."/>
        </authorList>
    </citation>
    <scope>NUCLEOTIDE SEQUENCE [MRNA]</scope>
    <source>
        <tissue>Venom duct</tissue>
    </source>
</reference>
<protein>
    <recommendedName>
        <fullName evidence="3">Conotoxin Cal5a L3</fullName>
    </recommendedName>
    <component>
        <recommendedName>
            <fullName evidence="3">Conotoxin Cal5b L3</fullName>
        </recommendedName>
    </component>
    <component>
        <recommendedName>
            <fullName evidence="3">Conotoxin Cal5.1</fullName>
        </recommendedName>
    </component>
</protein>
<dbReference type="EMBL" id="GU290199">
    <property type="protein sequence ID" value="ADB43126.1"/>
    <property type="molecule type" value="mRNA"/>
</dbReference>
<dbReference type="ConoServer" id="3981">
    <property type="toxin name" value="Cal5.1 L2 precursor"/>
</dbReference>
<dbReference type="GO" id="GO:0005576">
    <property type="term" value="C:extracellular region"/>
    <property type="evidence" value="ECO:0007669"/>
    <property type="project" value="UniProtKB-SubCell"/>
</dbReference>
<dbReference type="GO" id="GO:0099106">
    <property type="term" value="F:ion channel regulator activity"/>
    <property type="evidence" value="ECO:0007669"/>
    <property type="project" value="UniProtKB-KW"/>
</dbReference>
<dbReference type="GO" id="GO:0090729">
    <property type="term" value="F:toxin activity"/>
    <property type="evidence" value="ECO:0007669"/>
    <property type="project" value="UniProtKB-KW"/>
</dbReference>
<feature type="signal peptide" evidence="2">
    <location>
        <begin position="1"/>
        <end position="22"/>
    </location>
</feature>
<feature type="propeptide" id="PRO_5000566283" evidence="5">
    <location>
        <begin position="23"/>
        <end position="42"/>
    </location>
</feature>
<feature type="peptide" id="PRO_0000414964" description="Conotoxin Cal5a L3" evidence="5">
    <location>
        <begin position="44"/>
        <end position="74"/>
    </location>
</feature>
<feature type="peptide" id="PRO_0000414965" description="Conotoxin Cal5b L3" evidence="5">
    <location>
        <begin position="54"/>
        <end position="74"/>
    </location>
</feature>
<feature type="peptide" id="PRO_5000566284" description="Conotoxin Cal5.1" evidence="5">
    <location>
        <begin position="61"/>
        <end position="74"/>
    </location>
</feature>
<feature type="modified residue" description="4-hydroxyproline" evidence="1">
    <location>
        <position position="50"/>
    </location>
</feature>
<feature type="modified residue" description="4-hydroxyproline; partial" evidence="1">
    <location>
        <position position="58"/>
    </location>
</feature>
<feature type="modified residue" description="4-hydroxyproline; partial" evidence="1">
    <location>
        <position position="62"/>
    </location>
</feature>
<feature type="modified residue" description="4-hydroxyproline; partial" evidence="1">
    <location>
        <position position="64"/>
    </location>
</feature>
<comment type="function">
    <text evidence="4">Probable neurotoxin with unknown target. Possibly targets ion channels.</text>
</comment>
<comment type="subcellular location">
    <subcellularLocation>
        <location evidence="5">Secreted</location>
    </subcellularLocation>
</comment>
<comment type="tissue specificity">
    <text evidence="5">Expressed by the venom duct.</text>
</comment>
<comment type="domain">
    <text evidence="4">The cysteine framework is V (CC-CC).</text>
</comment>
<comment type="PTM">
    <text evidence="4">Contains 2 disulfide bonds that can be either 'C1-C3, C2-C4' or 'C1-C4, C2-C3', since these disulfide connectivities have been observed for conotoxins with cysteine framework V (for examples, see AC P0DQQ7 and AC P81755).</text>
</comment>
<comment type="similarity">
    <text evidence="4">Belongs to the conotoxin T superfamily.</text>
</comment>
<name>CU51C_CONCL</name>